<feature type="chain" id="PRO_0000388016" description="Structure-specific endonuclease subunit slx4">
    <location>
        <begin position="1"/>
        <end position="828"/>
    </location>
</feature>
<feature type="region of interest" description="Disordered" evidence="2">
    <location>
        <begin position="1"/>
        <end position="183"/>
    </location>
</feature>
<feature type="region of interest" description="Disordered" evidence="2">
    <location>
        <begin position="261"/>
        <end position="364"/>
    </location>
</feature>
<feature type="region of interest" description="Disordered" evidence="2">
    <location>
        <begin position="409"/>
        <end position="439"/>
    </location>
</feature>
<feature type="region of interest" description="Disordered" evidence="2">
    <location>
        <begin position="468"/>
        <end position="551"/>
    </location>
</feature>
<feature type="region of interest" description="Disordered" evidence="2">
    <location>
        <begin position="586"/>
        <end position="734"/>
    </location>
</feature>
<feature type="region of interest" description="Disordered" evidence="2">
    <location>
        <begin position="749"/>
        <end position="768"/>
    </location>
</feature>
<feature type="compositionally biased region" description="Basic and acidic residues" evidence="2">
    <location>
        <begin position="68"/>
        <end position="77"/>
    </location>
</feature>
<feature type="compositionally biased region" description="Polar residues" evidence="2">
    <location>
        <begin position="80"/>
        <end position="90"/>
    </location>
</feature>
<feature type="compositionally biased region" description="Basic residues" evidence="2">
    <location>
        <begin position="101"/>
        <end position="111"/>
    </location>
</feature>
<feature type="compositionally biased region" description="Basic residues" evidence="2">
    <location>
        <begin position="138"/>
        <end position="151"/>
    </location>
</feature>
<feature type="compositionally biased region" description="Basic residues" evidence="2">
    <location>
        <begin position="306"/>
        <end position="315"/>
    </location>
</feature>
<feature type="compositionally biased region" description="Basic residues" evidence="2">
    <location>
        <begin position="346"/>
        <end position="358"/>
    </location>
</feature>
<feature type="compositionally biased region" description="Polar residues" evidence="2">
    <location>
        <begin position="428"/>
        <end position="439"/>
    </location>
</feature>
<feature type="compositionally biased region" description="Basic and acidic residues" evidence="2">
    <location>
        <begin position="476"/>
        <end position="488"/>
    </location>
</feature>
<feature type="compositionally biased region" description="Polar residues" evidence="2">
    <location>
        <begin position="491"/>
        <end position="524"/>
    </location>
</feature>
<feature type="compositionally biased region" description="Basic residues" evidence="2">
    <location>
        <begin position="613"/>
        <end position="628"/>
    </location>
</feature>
<feature type="compositionally biased region" description="Low complexity" evidence="2">
    <location>
        <begin position="629"/>
        <end position="670"/>
    </location>
</feature>
<feature type="compositionally biased region" description="Acidic residues" evidence="2">
    <location>
        <begin position="675"/>
        <end position="685"/>
    </location>
</feature>
<feature type="compositionally biased region" description="Polar residues" evidence="2">
    <location>
        <begin position="710"/>
        <end position="727"/>
    </location>
</feature>
<dbReference type="EMBL" id="AM270139">
    <property type="protein sequence ID" value="CAK39581.1"/>
    <property type="status" value="ALT_SEQ"/>
    <property type="molecule type" value="Genomic_DNA"/>
</dbReference>
<dbReference type="RefSeq" id="XP_001391840.2">
    <property type="nucleotide sequence ID" value="XM_001391803.2"/>
</dbReference>
<dbReference type="SMR" id="A5AAW6"/>
<dbReference type="EnsemblFungi" id="CAK39581">
    <property type="protein sequence ID" value="CAK39581"/>
    <property type="gene ID" value="An07g07650"/>
</dbReference>
<dbReference type="GeneID" id="4982034"/>
<dbReference type="KEGG" id="ang:An07g07650"/>
<dbReference type="Proteomes" id="UP000006706">
    <property type="component" value="Chromosome 4L"/>
</dbReference>
<dbReference type="GO" id="GO:0033557">
    <property type="term" value="C:Slx1-Slx4 complex"/>
    <property type="evidence" value="ECO:0007669"/>
    <property type="project" value="UniProtKB-UniRule"/>
</dbReference>
<dbReference type="GO" id="GO:0017108">
    <property type="term" value="F:5'-flap endonuclease activity"/>
    <property type="evidence" value="ECO:0007669"/>
    <property type="project" value="InterPro"/>
</dbReference>
<dbReference type="GO" id="GO:0006310">
    <property type="term" value="P:DNA recombination"/>
    <property type="evidence" value="ECO:0007669"/>
    <property type="project" value="UniProtKB-UniRule"/>
</dbReference>
<dbReference type="GO" id="GO:0006281">
    <property type="term" value="P:DNA repair"/>
    <property type="evidence" value="ECO:0007669"/>
    <property type="project" value="UniProtKB-UniRule"/>
</dbReference>
<dbReference type="GO" id="GO:0006260">
    <property type="term" value="P:DNA replication"/>
    <property type="evidence" value="ECO:0007669"/>
    <property type="project" value="InterPro"/>
</dbReference>
<dbReference type="CDD" id="cd22999">
    <property type="entry name" value="SAP_SLX4"/>
    <property type="match status" value="1"/>
</dbReference>
<dbReference type="HAMAP" id="MF_03110">
    <property type="entry name" value="Endonuc_su_Slx4"/>
    <property type="match status" value="1"/>
</dbReference>
<dbReference type="InterPro" id="IPR027784">
    <property type="entry name" value="Slx4_ascomycetes"/>
</dbReference>
<dbReference type="InterPro" id="IPR018574">
    <property type="entry name" value="Structure-sp_endonuc_su_Slx4"/>
</dbReference>
<dbReference type="Pfam" id="PF09494">
    <property type="entry name" value="Slx4"/>
    <property type="match status" value="1"/>
</dbReference>
<comment type="function">
    <text evidence="1">Regulatory subunit of the slx1-slx4 structure-specific endonuclease that resolves DNA secondary structures generated during DNA repair and recombination. Has endonuclease activity towards branched DNA substrates, introducing single-strand cuts in duplex DNA close to junctions with ss-DNA.</text>
</comment>
<comment type="subunit">
    <text evidence="1">Forms a heterodimer with slx1.</text>
</comment>
<comment type="subcellular location">
    <subcellularLocation>
        <location evidence="1">Nucleus</location>
    </subcellularLocation>
</comment>
<comment type="PTM">
    <text evidence="1">Phosphorylated in response to DNA damage.</text>
</comment>
<comment type="similarity">
    <text evidence="1">Belongs to the SLX4 family.</text>
</comment>
<comment type="sequence caution" evidence="3">
    <conflict type="erroneous gene model prediction">
        <sequence resource="EMBL-CDS" id="CAK39581"/>
    </conflict>
</comment>
<sequence>MSATAEVLVISSSPERNPVHTPAPPAYDPERLFGLSPVDVETTPLPSPSDLFCPPTHSRFFEVGNQVDELRRDETRKKSSTLTNDDSAVTTLEGEPATDKPKRRGRPKKEQKRATEELGPCVTGNEKTTTKKTITGTSKKRAQPATKRSKQANKTISGRVAKAGTPQVKEAGEKAICPSTPTTALPLKATNDVLEWERDGLQLEQAMTRRLDWTPTVNKVKEVVELEGKSGSDDNTRGFGNLLSEYGFNGAAAPVNDFMASVEGGPTKRRRIELVDPGVYPAPRQSVADDSEKDNTEGTRKSTPAARKKPTKRANKFTTLTARVTAKYINESTEGSDVVDEETPKAKPKVSRSKKKGQASKSYEPEFVVLSPEEAAKSLDDQELVFGTCSQLEREDSPTTIRELQAAISESERSMTLEASGRPHRTQSKGSSSTVSRFNGSGNLWSVASRDVDGSLMQVEVVDLVNSPDRSGTITLDERPSNAKRVAEAECNTSDINPTQKGSDQAKAASTSETQPVVPSTTQSKNKKAENTTSIARKPDPKMPQYDNFTDAQLSKQAASFGFKPLKNRKKMIELLEKCWKAKNSISSEANNENTDQETPAEPESAPEPGNKPKGKGTTRKTTTKAKAKTQPSTSSKSTTEAISTTKSPSNPNSNTTTSTSTSISKPTPSYANVEEIEDSEEDSDPISFPSPSRLLPQTLQTNHKHAHTLPTSNLPSSPNRTTSTSVPKEPEPPAILLPLTEQITKAVRAQSAAHPASSNSNKTHTRKQTWHEKILMYDPIPLEEFTTWLNTEGLGLVNEDREVGAGFVRRWCESKGVVCCYRPRKKE</sequence>
<proteinExistence type="inferred from homology"/>
<name>SLX4_ASPNC</name>
<protein>
    <recommendedName>
        <fullName evidence="1">Structure-specific endonuclease subunit slx4</fullName>
    </recommendedName>
</protein>
<gene>
    <name type="primary">slx4</name>
    <name type="ORF">An07g07650</name>
</gene>
<keyword id="KW-0227">DNA damage</keyword>
<keyword id="KW-0233">DNA recombination</keyword>
<keyword id="KW-0234">DNA repair</keyword>
<keyword id="KW-0539">Nucleus</keyword>
<keyword id="KW-0597">Phosphoprotein</keyword>
<keyword id="KW-1185">Reference proteome</keyword>
<reference key="1">
    <citation type="journal article" date="2007" name="Nat. Biotechnol.">
        <title>Genome sequencing and analysis of the versatile cell factory Aspergillus niger CBS 513.88.</title>
        <authorList>
            <person name="Pel H.J."/>
            <person name="de Winde J.H."/>
            <person name="Archer D.B."/>
            <person name="Dyer P.S."/>
            <person name="Hofmann G."/>
            <person name="Schaap P.J."/>
            <person name="Turner G."/>
            <person name="de Vries R.P."/>
            <person name="Albang R."/>
            <person name="Albermann K."/>
            <person name="Andersen M.R."/>
            <person name="Bendtsen J.D."/>
            <person name="Benen J.A.E."/>
            <person name="van den Berg M."/>
            <person name="Breestraat S."/>
            <person name="Caddick M.X."/>
            <person name="Contreras R."/>
            <person name="Cornell M."/>
            <person name="Coutinho P.M."/>
            <person name="Danchin E.G.J."/>
            <person name="Debets A.J.M."/>
            <person name="Dekker P."/>
            <person name="van Dijck P.W.M."/>
            <person name="van Dijk A."/>
            <person name="Dijkhuizen L."/>
            <person name="Driessen A.J.M."/>
            <person name="d'Enfert C."/>
            <person name="Geysens S."/>
            <person name="Goosen C."/>
            <person name="Groot G.S.P."/>
            <person name="de Groot P.W.J."/>
            <person name="Guillemette T."/>
            <person name="Henrissat B."/>
            <person name="Herweijer M."/>
            <person name="van den Hombergh J.P.T.W."/>
            <person name="van den Hondel C.A.M.J.J."/>
            <person name="van der Heijden R.T.J.M."/>
            <person name="van der Kaaij R.M."/>
            <person name="Klis F.M."/>
            <person name="Kools H.J."/>
            <person name="Kubicek C.P."/>
            <person name="van Kuyk P.A."/>
            <person name="Lauber J."/>
            <person name="Lu X."/>
            <person name="van der Maarel M.J.E.C."/>
            <person name="Meulenberg R."/>
            <person name="Menke H."/>
            <person name="Mortimer M.A."/>
            <person name="Nielsen J."/>
            <person name="Oliver S.G."/>
            <person name="Olsthoorn M."/>
            <person name="Pal K."/>
            <person name="van Peij N.N.M.E."/>
            <person name="Ram A.F.J."/>
            <person name="Rinas U."/>
            <person name="Roubos J.A."/>
            <person name="Sagt C.M.J."/>
            <person name="Schmoll M."/>
            <person name="Sun J."/>
            <person name="Ussery D."/>
            <person name="Varga J."/>
            <person name="Vervecken W."/>
            <person name="van de Vondervoort P.J.J."/>
            <person name="Wedler H."/>
            <person name="Woesten H.A.B."/>
            <person name="Zeng A.-P."/>
            <person name="van Ooyen A.J.J."/>
            <person name="Visser J."/>
            <person name="Stam H."/>
        </authorList>
    </citation>
    <scope>NUCLEOTIDE SEQUENCE [LARGE SCALE GENOMIC DNA]</scope>
    <source>
        <strain>ATCC MYA-4892 / CBS 513.88 / FGSC A1513</strain>
    </source>
</reference>
<organism>
    <name type="scientific">Aspergillus niger (strain ATCC MYA-4892 / CBS 513.88 / FGSC A1513)</name>
    <dbReference type="NCBI Taxonomy" id="425011"/>
    <lineage>
        <taxon>Eukaryota</taxon>
        <taxon>Fungi</taxon>
        <taxon>Dikarya</taxon>
        <taxon>Ascomycota</taxon>
        <taxon>Pezizomycotina</taxon>
        <taxon>Eurotiomycetes</taxon>
        <taxon>Eurotiomycetidae</taxon>
        <taxon>Eurotiales</taxon>
        <taxon>Aspergillaceae</taxon>
        <taxon>Aspergillus</taxon>
        <taxon>Aspergillus subgen. Circumdati</taxon>
    </lineage>
</organism>
<evidence type="ECO:0000255" key="1">
    <source>
        <dbReference type="HAMAP-Rule" id="MF_03110"/>
    </source>
</evidence>
<evidence type="ECO:0000256" key="2">
    <source>
        <dbReference type="SAM" id="MobiDB-lite"/>
    </source>
</evidence>
<evidence type="ECO:0000305" key="3"/>
<accession>A5AAW6</accession>